<sequence length="275" mass="30214">MSSYFVNSFCGRYPNGPDYQLHNYGDHSSVSEQYRDSATMHSSRYGYGYNGMDLSISRPASNHFNASERSRSYSAAAATTAAAAGPEAGADTRYNQPATSSPSPDPLPCSAVVSPSAGDNHHGIKNSIASPTTSSNSSSSSSHISRDGVGTSPGTEDDTPASSDPPSSQNGQSTAQQQPQIYPWMRKLHISHDSMGGPEGKRARTAYTRYQTLELEKEFHFNRYLTRRRRIEIAHALCLTERQIKIWFQNRRMKWKKDNKLKSMSMAAAGGGYRP</sequence>
<keyword id="KW-0217">Developmental protein</keyword>
<keyword id="KW-0238">DNA-binding</keyword>
<keyword id="KW-0371">Homeobox</keyword>
<keyword id="KW-0539">Nucleus</keyword>
<keyword id="KW-0804">Transcription</keyword>
<keyword id="KW-0805">Transcription regulation</keyword>
<protein>
    <recommendedName>
        <fullName>Homeobox protein Hox-A5</fullName>
    </recommendedName>
</protein>
<feature type="chain" id="PRO_0000200063" description="Homeobox protein Hox-A5">
    <location>
        <begin position="1"/>
        <end position="275"/>
    </location>
</feature>
<feature type="DNA-binding region" description="Homeobox" evidence="2">
    <location>
        <begin position="200"/>
        <end position="259"/>
    </location>
</feature>
<feature type="region of interest" description="Disordered" evidence="3">
    <location>
        <begin position="84"/>
        <end position="177"/>
    </location>
</feature>
<feature type="short sequence motif" description="Antp-type hexapeptide">
    <location>
        <begin position="181"/>
        <end position="186"/>
    </location>
</feature>
<feature type="compositionally biased region" description="Polar residues" evidence="3">
    <location>
        <begin position="93"/>
        <end position="102"/>
    </location>
</feature>
<feature type="compositionally biased region" description="Low complexity" evidence="3">
    <location>
        <begin position="126"/>
        <end position="143"/>
    </location>
</feature>
<name>HXA5_HETFR</name>
<dbReference type="EMBL" id="AF224262">
    <property type="protein sequence ID" value="AAF44643.1"/>
    <property type="molecule type" value="Genomic_DNA"/>
</dbReference>
<dbReference type="SMR" id="Q9IA23"/>
<dbReference type="GO" id="GO:0005634">
    <property type="term" value="C:nucleus"/>
    <property type="evidence" value="ECO:0007669"/>
    <property type="project" value="UniProtKB-SubCell"/>
</dbReference>
<dbReference type="GO" id="GO:0000981">
    <property type="term" value="F:DNA-binding transcription factor activity, RNA polymerase II-specific"/>
    <property type="evidence" value="ECO:0007669"/>
    <property type="project" value="InterPro"/>
</dbReference>
<dbReference type="GO" id="GO:0000978">
    <property type="term" value="F:RNA polymerase II cis-regulatory region sequence-specific DNA binding"/>
    <property type="evidence" value="ECO:0007669"/>
    <property type="project" value="TreeGrafter"/>
</dbReference>
<dbReference type="GO" id="GO:0009952">
    <property type="term" value="P:anterior/posterior pattern specification"/>
    <property type="evidence" value="ECO:0007669"/>
    <property type="project" value="TreeGrafter"/>
</dbReference>
<dbReference type="CDD" id="cd00086">
    <property type="entry name" value="homeodomain"/>
    <property type="match status" value="1"/>
</dbReference>
<dbReference type="FunFam" id="1.10.10.60:FF:000055">
    <property type="entry name" value="Homeobox protein Hox-A5"/>
    <property type="match status" value="1"/>
</dbReference>
<dbReference type="Gene3D" id="1.10.10.60">
    <property type="entry name" value="Homeodomain-like"/>
    <property type="match status" value="1"/>
</dbReference>
<dbReference type="InterPro" id="IPR050296">
    <property type="entry name" value="Antp_homeobox"/>
</dbReference>
<dbReference type="InterPro" id="IPR001356">
    <property type="entry name" value="HD"/>
</dbReference>
<dbReference type="InterPro" id="IPR020479">
    <property type="entry name" value="HD_metazoa"/>
</dbReference>
<dbReference type="InterPro" id="IPR017995">
    <property type="entry name" value="Homeobox_antennapedia"/>
</dbReference>
<dbReference type="InterPro" id="IPR001827">
    <property type="entry name" value="Homeobox_Antennapedia_CS"/>
</dbReference>
<dbReference type="InterPro" id="IPR017970">
    <property type="entry name" value="Homeobox_CS"/>
</dbReference>
<dbReference type="InterPro" id="IPR009057">
    <property type="entry name" value="Homeodomain-like_sf"/>
</dbReference>
<dbReference type="PANTHER" id="PTHR45659">
    <property type="entry name" value="HOMEOBOX PROTEIN HOX"/>
    <property type="match status" value="1"/>
</dbReference>
<dbReference type="PANTHER" id="PTHR45659:SF10">
    <property type="entry name" value="HOMEOBOX PROTEIN HOX-A5"/>
    <property type="match status" value="1"/>
</dbReference>
<dbReference type="Pfam" id="PF00046">
    <property type="entry name" value="Homeodomain"/>
    <property type="match status" value="1"/>
</dbReference>
<dbReference type="PRINTS" id="PR00025">
    <property type="entry name" value="ANTENNAPEDIA"/>
</dbReference>
<dbReference type="PRINTS" id="PR00024">
    <property type="entry name" value="HOMEOBOX"/>
</dbReference>
<dbReference type="SMART" id="SM00389">
    <property type="entry name" value="HOX"/>
    <property type="match status" value="1"/>
</dbReference>
<dbReference type="SUPFAM" id="SSF46689">
    <property type="entry name" value="Homeodomain-like"/>
    <property type="match status" value="1"/>
</dbReference>
<dbReference type="PROSITE" id="PS00032">
    <property type="entry name" value="ANTENNAPEDIA"/>
    <property type="match status" value="1"/>
</dbReference>
<dbReference type="PROSITE" id="PS00027">
    <property type="entry name" value="HOMEOBOX_1"/>
    <property type="match status" value="1"/>
</dbReference>
<dbReference type="PROSITE" id="PS50071">
    <property type="entry name" value="HOMEOBOX_2"/>
    <property type="match status" value="1"/>
</dbReference>
<accession>Q9IA23</accession>
<comment type="function">
    <text evidence="1">Sequence-specific transcription factor which is part of a developmental regulatory system that provides cells with specific positional identities on the anterior-posterior axis.</text>
</comment>
<comment type="subcellular location">
    <subcellularLocation>
        <location evidence="2">Nucleus</location>
    </subcellularLocation>
</comment>
<comment type="similarity">
    <text evidence="4">Belongs to the Antp homeobox family.</text>
</comment>
<evidence type="ECO:0000250" key="1"/>
<evidence type="ECO:0000255" key="2">
    <source>
        <dbReference type="PROSITE-ProRule" id="PRU00108"/>
    </source>
</evidence>
<evidence type="ECO:0000256" key="3">
    <source>
        <dbReference type="SAM" id="MobiDB-lite"/>
    </source>
</evidence>
<evidence type="ECO:0000305" key="4"/>
<gene>
    <name type="primary">HOXA5</name>
</gene>
<reference key="1">
    <citation type="journal article" date="2000" name="Proc. Natl. Acad. Sci. U.S.A.">
        <title>Hox cluster genomics in the horn shark, Heterodontus francisci.</title>
        <authorList>
            <person name="Kim C.B."/>
            <person name="Amemiya C."/>
            <person name="Bailey W."/>
            <person name="Kawasaki K."/>
            <person name="Mezey J."/>
            <person name="Miller W."/>
            <person name="Minoshima S."/>
            <person name="Shimizu N."/>
            <person name="Wagner G."/>
            <person name="Ruddle F."/>
        </authorList>
    </citation>
    <scope>NUCLEOTIDE SEQUENCE [GENOMIC DNA]</scope>
</reference>
<proteinExistence type="inferred from homology"/>
<organism>
    <name type="scientific">Heterodontus francisci</name>
    <name type="common">Horn shark</name>
    <name type="synonym">Cestracion francisci</name>
    <dbReference type="NCBI Taxonomy" id="7792"/>
    <lineage>
        <taxon>Eukaryota</taxon>
        <taxon>Metazoa</taxon>
        <taxon>Chordata</taxon>
        <taxon>Craniata</taxon>
        <taxon>Vertebrata</taxon>
        <taxon>Chondrichthyes</taxon>
        <taxon>Elasmobranchii</taxon>
        <taxon>Galeomorphii</taxon>
        <taxon>Heterodontoidea</taxon>
        <taxon>Heterodontiformes</taxon>
        <taxon>Heterodontidae</taxon>
        <taxon>Heterodontus</taxon>
    </lineage>
</organism>